<sequence>MSILLFGVSHRSAPVSVLEQLSIDESEQVKIVDRVLQSPLVTEAMVLSTCNRVEVYAVVEAFHGGLSAIGQVLSDHSGMSMGELTKHAYVRYSEAAVEHLFAVASGLDSAVVGEQQVLGQVRRSYSAAEANRTVGRVLHELAQRTLSVGKRVHSETSIDAAGASVVSVALGIAERKLGGLGAKTAVVIGAGSMGALSSAHLTRAGIGKVHVLNRSLARAQRLAGKIRQSGVLAEARTLDRLAEVLTDADAVVSCTGAVAPVVSLADVHHALATARRDETTRPLVICDLGMPRDVDPAVAGLPGVWLIDVERVQREPSAHAASADVAAARHIVAAEVAGYLAGQRMAEVTPTVTALRQRAADVVEAELLRLDNRLPGLDSAERDEVARTVRRVVDKLLHAPTVRIKQLASAPGGDSYAEALRELFQLDQTAVDAVATAGELPVFSSGLDAGSGPQGADGPSAGPTPSAPNPSAE</sequence>
<feature type="chain" id="PRO_0000335052" description="Glutamyl-tRNA reductase">
    <location>
        <begin position="1"/>
        <end position="473"/>
    </location>
</feature>
<feature type="region of interest" description="Disordered" evidence="2">
    <location>
        <begin position="445"/>
        <end position="473"/>
    </location>
</feature>
<feature type="active site" description="Nucleophile" evidence="1">
    <location>
        <position position="50"/>
    </location>
</feature>
<feature type="binding site" evidence="1">
    <location>
        <begin position="49"/>
        <end position="52"/>
    </location>
    <ligand>
        <name>substrate</name>
    </ligand>
</feature>
<feature type="binding site" evidence="1">
    <location>
        <position position="109"/>
    </location>
    <ligand>
        <name>substrate</name>
    </ligand>
</feature>
<feature type="binding site" evidence="1">
    <location>
        <begin position="114"/>
        <end position="116"/>
    </location>
    <ligand>
        <name>substrate</name>
    </ligand>
</feature>
<feature type="binding site" evidence="1">
    <location>
        <position position="120"/>
    </location>
    <ligand>
        <name>substrate</name>
    </ligand>
</feature>
<feature type="binding site" evidence="1">
    <location>
        <begin position="189"/>
        <end position="194"/>
    </location>
    <ligand>
        <name>NADP(+)</name>
        <dbReference type="ChEBI" id="CHEBI:58349"/>
    </ligand>
</feature>
<feature type="site" description="Important for activity" evidence="1">
    <location>
        <position position="99"/>
    </location>
</feature>
<reference key="1">
    <citation type="journal article" date="2007" name="Genome Res.">
        <title>Reductive evolution and niche adaptation inferred from the genome of Mycobacterium ulcerans, the causative agent of Buruli ulcer.</title>
        <authorList>
            <person name="Stinear T.P."/>
            <person name="Seemann T."/>
            <person name="Pidot S."/>
            <person name="Frigui W."/>
            <person name="Reysset G."/>
            <person name="Garnier T."/>
            <person name="Meurice G."/>
            <person name="Simon D."/>
            <person name="Bouchier C."/>
            <person name="Ma L."/>
            <person name="Tichit M."/>
            <person name="Porter J.L."/>
            <person name="Ryan J."/>
            <person name="Johnson P.D.R."/>
            <person name="Davies J.K."/>
            <person name="Jenkin G.A."/>
            <person name="Small P.L.C."/>
            <person name="Jones L.M."/>
            <person name="Tekaia F."/>
            <person name="Laval F."/>
            <person name="Daffe M."/>
            <person name="Parkhill J."/>
            <person name="Cole S.T."/>
        </authorList>
    </citation>
    <scope>NUCLEOTIDE SEQUENCE [LARGE SCALE GENOMIC DNA]</scope>
    <source>
        <strain>Agy99</strain>
    </source>
</reference>
<accession>A0PW28</accession>
<dbReference type="EC" id="1.2.1.70" evidence="1"/>
<dbReference type="EMBL" id="CP000325">
    <property type="protein sequence ID" value="ABL06547.1"/>
    <property type="molecule type" value="Genomic_DNA"/>
</dbReference>
<dbReference type="RefSeq" id="WP_011742144.1">
    <property type="nucleotide sequence ID" value="NC_008611.1"/>
</dbReference>
<dbReference type="SMR" id="A0PW28"/>
<dbReference type="KEGG" id="mul:MUL_4598"/>
<dbReference type="eggNOG" id="COG0373">
    <property type="taxonomic scope" value="Bacteria"/>
</dbReference>
<dbReference type="HOGENOM" id="CLU_035113_4_0_11"/>
<dbReference type="UniPathway" id="UPA00251">
    <property type="reaction ID" value="UER00316"/>
</dbReference>
<dbReference type="Proteomes" id="UP000000765">
    <property type="component" value="Chromosome"/>
</dbReference>
<dbReference type="GO" id="GO:0008883">
    <property type="term" value="F:glutamyl-tRNA reductase activity"/>
    <property type="evidence" value="ECO:0007669"/>
    <property type="project" value="UniProtKB-UniRule"/>
</dbReference>
<dbReference type="GO" id="GO:0050661">
    <property type="term" value="F:NADP binding"/>
    <property type="evidence" value="ECO:0007669"/>
    <property type="project" value="InterPro"/>
</dbReference>
<dbReference type="GO" id="GO:0019353">
    <property type="term" value="P:protoporphyrinogen IX biosynthetic process from glutamate"/>
    <property type="evidence" value="ECO:0007669"/>
    <property type="project" value="TreeGrafter"/>
</dbReference>
<dbReference type="CDD" id="cd05213">
    <property type="entry name" value="NAD_bind_Glutamyl_tRNA_reduct"/>
    <property type="match status" value="1"/>
</dbReference>
<dbReference type="FunFam" id="3.30.460.30:FF:000001">
    <property type="entry name" value="Glutamyl-tRNA reductase"/>
    <property type="match status" value="1"/>
</dbReference>
<dbReference type="Gene3D" id="3.30.460.30">
    <property type="entry name" value="Glutamyl-tRNA reductase, N-terminal domain"/>
    <property type="match status" value="1"/>
</dbReference>
<dbReference type="Gene3D" id="3.40.50.720">
    <property type="entry name" value="NAD(P)-binding Rossmann-like Domain"/>
    <property type="match status" value="1"/>
</dbReference>
<dbReference type="HAMAP" id="MF_00087">
    <property type="entry name" value="Glu_tRNA_reductase"/>
    <property type="match status" value="1"/>
</dbReference>
<dbReference type="InterPro" id="IPR000343">
    <property type="entry name" value="4pyrrol_synth_GluRdtase"/>
</dbReference>
<dbReference type="InterPro" id="IPR015896">
    <property type="entry name" value="4pyrrol_synth_GluRdtase_dimer"/>
</dbReference>
<dbReference type="InterPro" id="IPR015895">
    <property type="entry name" value="4pyrrol_synth_GluRdtase_N"/>
</dbReference>
<dbReference type="InterPro" id="IPR018214">
    <property type="entry name" value="GluRdtase_CS"/>
</dbReference>
<dbReference type="InterPro" id="IPR036453">
    <property type="entry name" value="GluRdtase_dimer_dom_sf"/>
</dbReference>
<dbReference type="InterPro" id="IPR036343">
    <property type="entry name" value="GluRdtase_N_sf"/>
</dbReference>
<dbReference type="InterPro" id="IPR036291">
    <property type="entry name" value="NAD(P)-bd_dom_sf"/>
</dbReference>
<dbReference type="InterPro" id="IPR006151">
    <property type="entry name" value="Shikm_DH/Glu-tRNA_Rdtase"/>
</dbReference>
<dbReference type="NCBIfam" id="TIGR01035">
    <property type="entry name" value="hemA"/>
    <property type="match status" value="1"/>
</dbReference>
<dbReference type="NCBIfam" id="NF000744">
    <property type="entry name" value="PRK00045.1-3"/>
    <property type="match status" value="1"/>
</dbReference>
<dbReference type="PANTHER" id="PTHR43013">
    <property type="entry name" value="GLUTAMYL-TRNA REDUCTASE"/>
    <property type="match status" value="1"/>
</dbReference>
<dbReference type="PANTHER" id="PTHR43013:SF1">
    <property type="entry name" value="GLUTAMYL-TRNA REDUCTASE"/>
    <property type="match status" value="1"/>
</dbReference>
<dbReference type="Pfam" id="PF00745">
    <property type="entry name" value="GlutR_dimer"/>
    <property type="match status" value="1"/>
</dbReference>
<dbReference type="Pfam" id="PF05201">
    <property type="entry name" value="GlutR_N"/>
    <property type="match status" value="1"/>
</dbReference>
<dbReference type="Pfam" id="PF01488">
    <property type="entry name" value="Shikimate_DH"/>
    <property type="match status" value="1"/>
</dbReference>
<dbReference type="PIRSF" id="PIRSF000445">
    <property type="entry name" value="4pyrrol_synth_GluRdtase"/>
    <property type="match status" value="1"/>
</dbReference>
<dbReference type="SUPFAM" id="SSF69742">
    <property type="entry name" value="Glutamyl tRNA-reductase catalytic, N-terminal domain"/>
    <property type="match status" value="1"/>
</dbReference>
<dbReference type="SUPFAM" id="SSF69075">
    <property type="entry name" value="Glutamyl tRNA-reductase dimerization domain"/>
    <property type="match status" value="1"/>
</dbReference>
<dbReference type="SUPFAM" id="SSF51735">
    <property type="entry name" value="NAD(P)-binding Rossmann-fold domains"/>
    <property type="match status" value="1"/>
</dbReference>
<dbReference type="PROSITE" id="PS00747">
    <property type="entry name" value="GLUTR"/>
    <property type="match status" value="1"/>
</dbReference>
<proteinExistence type="inferred from homology"/>
<comment type="function">
    <text evidence="1">Catalyzes the NADPH-dependent reduction of glutamyl-tRNA(Glu) to glutamate 1-semialdehyde (GSA).</text>
</comment>
<comment type="catalytic activity">
    <reaction evidence="1">
        <text>(S)-4-amino-5-oxopentanoate + tRNA(Glu) + NADP(+) = L-glutamyl-tRNA(Glu) + NADPH + H(+)</text>
        <dbReference type="Rhea" id="RHEA:12344"/>
        <dbReference type="Rhea" id="RHEA-COMP:9663"/>
        <dbReference type="Rhea" id="RHEA-COMP:9680"/>
        <dbReference type="ChEBI" id="CHEBI:15378"/>
        <dbReference type="ChEBI" id="CHEBI:57501"/>
        <dbReference type="ChEBI" id="CHEBI:57783"/>
        <dbReference type="ChEBI" id="CHEBI:58349"/>
        <dbReference type="ChEBI" id="CHEBI:78442"/>
        <dbReference type="ChEBI" id="CHEBI:78520"/>
        <dbReference type="EC" id="1.2.1.70"/>
    </reaction>
</comment>
<comment type="pathway">
    <text evidence="1">Porphyrin-containing compound metabolism; protoporphyrin-IX biosynthesis; 5-aminolevulinate from L-glutamyl-tRNA(Glu): step 1/2.</text>
</comment>
<comment type="subunit">
    <text evidence="1">Homodimer.</text>
</comment>
<comment type="domain">
    <text evidence="1">Possesses an unusual extended V-shaped dimeric structure with each monomer consisting of three distinct domains arranged along a curved 'spinal' alpha-helix. The N-terminal catalytic domain specifically recognizes the glutamate moiety of the substrate. The second domain is the NADPH-binding domain, and the third C-terminal domain is responsible for dimerization.</text>
</comment>
<comment type="miscellaneous">
    <text evidence="1">During catalysis, the active site Cys acts as a nucleophile attacking the alpha-carbonyl group of tRNA-bound glutamate with the formation of a thioester intermediate between enzyme and glutamate, and the concomitant release of tRNA(Glu). The thioester intermediate is finally reduced by direct hydride transfer from NADPH, to form the product GSA.</text>
</comment>
<comment type="similarity">
    <text evidence="1">Belongs to the glutamyl-tRNA reductase family.</text>
</comment>
<evidence type="ECO:0000255" key="1">
    <source>
        <dbReference type="HAMAP-Rule" id="MF_00087"/>
    </source>
</evidence>
<evidence type="ECO:0000256" key="2">
    <source>
        <dbReference type="SAM" id="MobiDB-lite"/>
    </source>
</evidence>
<protein>
    <recommendedName>
        <fullName evidence="1">Glutamyl-tRNA reductase</fullName>
        <shortName evidence="1">GluTR</shortName>
        <ecNumber evidence="1">1.2.1.70</ecNumber>
    </recommendedName>
</protein>
<organism>
    <name type="scientific">Mycobacterium ulcerans (strain Agy99)</name>
    <dbReference type="NCBI Taxonomy" id="362242"/>
    <lineage>
        <taxon>Bacteria</taxon>
        <taxon>Bacillati</taxon>
        <taxon>Actinomycetota</taxon>
        <taxon>Actinomycetes</taxon>
        <taxon>Mycobacteriales</taxon>
        <taxon>Mycobacteriaceae</taxon>
        <taxon>Mycobacterium</taxon>
        <taxon>Mycobacterium ulcerans group</taxon>
    </lineage>
</organism>
<name>HEM1_MYCUA</name>
<keyword id="KW-0521">NADP</keyword>
<keyword id="KW-0560">Oxidoreductase</keyword>
<keyword id="KW-0627">Porphyrin biosynthesis</keyword>
<gene>
    <name evidence="1" type="primary">hemA</name>
    <name type="ordered locus">MUL_4598</name>
</gene>